<evidence type="ECO:0000255" key="1">
    <source>
        <dbReference type="HAMAP-Rule" id="MF_01321"/>
    </source>
</evidence>
<gene>
    <name evidence="1" type="primary">rpoB</name>
</gene>
<geneLocation type="chloroplast"/>
<dbReference type="EC" id="2.7.7.6" evidence="1"/>
<dbReference type="EMBL" id="AP009374">
    <property type="protein sequence ID" value="BAF50453.1"/>
    <property type="molecule type" value="Genomic_DNA"/>
</dbReference>
<dbReference type="RefSeq" id="YP_001123629.1">
    <property type="nucleotide sequence ID" value="NC_009273.1"/>
</dbReference>
<dbReference type="SMR" id="A4QL98"/>
<dbReference type="GeneID" id="4962050"/>
<dbReference type="GO" id="GO:0009507">
    <property type="term" value="C:chloroplast"/>
    <property type="evidence" value="ECO:0007669"/>
    <property type="project" value="UniProtKB-SubCell"/>
</dbReference>
<dbReference type="GO" id="GO:0000428">
    <property type="term" value="C:DNA-directed RNA polymerase complex"/>
    <property type="evidence" value="ECO:0007669"/>
    <property type="project" value="UniProtKB-KW"/>
</dbReference>
<dbReference type="GO" id="GO:0005739">
    <property type="term" value="C:mitochondrion"/>
    <property type="evidence" value="ECO:0007669"/>
    <property type="project" value="GOC"/>
</dbReference>
<dbReference type="GO" id="GO:0003677">
    <property type="term" value="F:DNA binding"/>
    <property type="evidence" value="ECO:0007669"/>
    <property type="project" value="UniProtKB-UniRule"/>
</dbReference>
<dbReference type="GO" id="GO:0003899">
    <property type="term" value="F:DNA-directed RNA polymerase activity"/>
    <property type="evidence" value="ECO:0007669"/>
    <property type="project" value="UniProtKB-UniRule"/>
</dbReference>
<dbReference type="GO" id="GO:0032549">
    <property type="term" value="F:ribonucleoside binding"/>
    <property type="evidence" value="ECO:0007669"/>
    <property type="project" value="InterPro"/>
</dbReference>
<dbReference type="GO" id="GO:0006351">
    <property type="term" value="P:DNA-templated transcription"/>
    <property type="evidence" value="ECO:0007669"/>
    <property type="project" value="UniProtKB-UniRule"/>
</dbReference>
<dbReference type="CDD" id="cd00653">
    <property type="entry name" value="RNA_pol_B_RPB2"/>
    <property type="match status" value="1"/>
</dbReference>
<dbReference type="FunFam" id="2.40.50.150:FF:000006">
    <property type="entry name" value="DNA-directed RNA polymerase subunit beta"/>
    <property type="match status" value="1"/>
</dbReference>
<dbReference type="FunFam" id="3.90.1110.10:FF:000009">
    <property type="entry name" value="DNA-directed RNA polymerase subunit beta"/>
    <property type="match status" value="1"/>
</dbReference>
<dbReference type="Gene3D" id="2.40.50.100">
    <property type="match status" value="1"/>
</dbReference>
<dbReference type="Gene3D" id="2.40.50.150">
    <property type="match status" value="1"/>
</dbReference>
<dbReference type="Gene3D" id="3.90.1100.10">
    <property type="match status" value="1"/>
</dbReference>
<dbReference type="Gene3D" id="2.30.150.10">
    <property type="entry name" value="DNA-directed RNA polymerase, beta subunit, external 1 domain"/>
    <property type="match status" value="1"/>
</dbReference>
<dbReference type="Gene3D" id="2.40.270.10">
    <property type="entry name" value="DNA-directed RNA polymerase, subunit 2, domain 6"/>
    <property type="match status" value="2"/>
</dbReference>
<dbReference type="Gene3D" id="3.90.1800.10">
    <property type="entry name" value="RNA polymerase alpha subunit dimerisation domain"/>
    <property type="match status" value="1"/>
</dbReference>
<dbReference type="Gene3D" id="3.90.1110.10">
    <property type="entry name" value="RNA polymerase Rpb2, domain 2"/>
    <property type="match status" value="1"/>
</dbReference>
<dbReference type="HAMAP" id="MF_01321">
    <property type="entry name" value="RNApol_bact_RpoB"/>
    <property type="match status" value="1"/>
</dbReference>
<dbReference type="InterPro" id="IPR042107">
    <property type="entry name" value="DNA-dir_RNA_pol_bsu_ext_1_sf"/>
</dbReference>
<dbReference type="InterPro" id="IPR015712">
    <property type="entry name" value="DNA-dir_RNA_pol_su2"/>
</dbReference>
<dbReference type="InterPro" id="IPR007120">
    <property type="entry name" value="DNA-dir_RNAP_su2_dom"/>
</dbReference>
<dbReference type="InterPro" id="IPR037033">
    <property type="entry name" value="DNA-dir_RNAP_su2_hyb_sf"/>
</dbReference>
<dbReference type="InterPro" id="IPR010243">
    <property type="entry name" value="RNA_pol_bsu_bac"/>
</dbReference>
<dbReference type="InterPro" id="IPR007121">
    <property type="entry name" value="RNA_pol_bsu_CS"/>
</dbReference>
<dbReference type="InterPro" id="IPR007642">
    <property type="entry name" value="RNA_pol_Rpb2_2"/>
</dbReference>
<dbReference type="InterPro" id="IPR037034">
    <property type="entry name" value="RNA_pol_Rpb2_2_sf"/>
</dbReference>
<dbReference type="InterPro" id="IPR007645">
    <property type="entry name" value="RNA_pol_Rpb2_3"/>
</dbReference>
<dbReference type="InterPro" id="IPR007641">
    <property type="entry name" value="RNA_pol_Rpb2_7"/>
</dbReference>
<dbReference type="InterPro" id="IPR014724">
    <property type="entry name" value="RNA_pol_RPB2_OB-fold"/>
</dbReference>
<dbReference type="NCBIfam" id="NF001616">
    <property type="entry name" value="PRK00405.1"/>
    <property type="match status" value="1"/>
</dbReference>
<dbReference type="PANTHER" id="PTHR20856">
    <property type="entry name" value="DNA-DIRECTED RNA POLYMERASE I SUBUNIT 2"/>
    <property type="match status" value="1"/>
</dbReference>
<dbReference type="Pfam" id="PF04561">
    <property type="entry name" value="RNA_pol_Rpb2_2"/>
    <property type="match status" value="1"/>
</dbReference>
<dbReference type="Pfam" id="PF04565">
    <property type="entry name" value="RNA_pol_Rpb2_3"/>
    <property type="match status" value="1"/>
</dbReference>
<dbReference type="Pfam" id="PF00562">
    <property type="entry name" value="RNA_pol_Rpb2_6"/>
    <property type="match status" value="1"/>
</dbReference>
<dbReference type="Pfam" id="PF04560">
    <property type="entry name" value="RNA_pol_Rpb2_7"/>
    <property type="match status" value="1"/>
</dbReference>
<dbReference type="SUPFAM" id="SSF64484">
    <property type="entry name" value="beta and beta-prime subunits of DNA dependent RNA-polymerase"/>
    <property type="match status" value="1"/>
</dbReference>
<dbReference type="PROSITE" id="PS01166">
    <property type="entry name" value="RNA_POL_BETA"/>
    <property type="match status" value="1"/>
</dbReference>
<reference key="1">
    <citation type="submission" date="2007-03" db="EMBL/GenBank/DDBJ databases">
        <title>Sequencing analysis of Lepidium virginicum JO26 chloroplast DNA.</title>
        <authorList>
            <person name="Hosouchi T."/>
            <person name="Tsuruoka H."/>
            <person name="Kotani H."/>
        </authorList>
    </citation>
    <scope>NUCLEOTIDE SEQUENCE [LARGE SCALE GENOMIC DNA]</scope>
</reference>
<proteinExistence type="inferred from homology"/>
<comment type="function">
    <text evidence="1">DNA-dependent RNA polymerase catalyzes the transcription of DNA into RNA using the four ribonucleoside triphosphates as substrates.</text>
</comment>
<comment type="catalytic activity">
    <reaction evidence="1">
        <text>RNA(n) + a ribonucleoside 5'-triphosphate = RNA(n+1) + diphosphate</text>
        <dbReference type="Rhea" id="RHEA:21248"/>
        <dbReference type="Rhea" id="RHEA-COMP:14527"/>
        <dbReference type="Rhea" id="RHEA-COMP:17342"/>
        <dbReference type="ChEBI" id="CHEBI:33019"/>
        <dbReference type="ChEBI" id="CHEBI:61557"/>
        <dbReference type="ChEBI" id="CHEBI:140395"/>
        <dbReference type="EC" id="2.7.7.6"/>
    </reaction>
</comment>
<comment type="subunit">
    <text evidence="1">In plastids the minimal PEP RNA polymerase catalytic core is composed of four subunits: alpha, beta, beta', and beta''. When a (nuclear-encoded) sigma factor is associated with the core the holoenzyme is formed, which can initiate transcription.</text>
</comment>
<comment type="subcellular location">
    <subcellularLocation>
        <location>Plastid</location>
        <location>Chloroplast</location>
    </subcellularLocation>
</comment>
<comment type="similarity">
    <text evidence="1">Belongs to the RNA polymerase beta chain family.</text>
</comment>
<sequence>MLGDGKEGTSTIPGFNQIQFEGFYRFIDQGLIEELSKFPKIEDIDHEIEFQLFVETYQLVEPLIKERDAVYESLTYSSELYVSAGLIWKTSRNMQEQRIFIGNIPLMNSLGTSIVNGIYRIVINQILQSPGIYYQSELDHNGISVYTGTIISDWGGRLELEIDKKARIWARVSRKQKISILVLSSAMGSNLREILENVCYPEIFLSFLTDKEKKKIGSKENAILEFYQQFSCVGGDPIFSESLCKELQKKFFHQRCELGRIGRRNINWRLNLNIPQNNIFLLPRDILAAADHLIGMKFGMGTLDDMNHLKNKRIRSVADLLQDQLGLALARLENVVKGTISGAIRHKLIPTPQNLVTSTPLTTTYESFFGLHPLSQVLDRTNPLTQIVHGRKLSYLGPGGLTGRTANFRIRDIHPSHYGRICPIDTSEGINVGLIGSLSIHARIGDWGSLESPFYELFEKSKKARIRMLFLSPSQDEYYMIAAGNSLALNRGIQEEQAVPARYRQEFLTIAWEEVHLRSIFPFQYFSIGASLIPFIEHNDANRALMSSNMQRQAVPLSRSEKCIVGTGLERQVALDSGVPAIAEHEGKILYTDTEKIIFSGNGDTLSIPLIMYQRSNKNTCMHQKPQVRRGKCIKKGQILADGAATVGGELALGKNILVAYMPWEGYNFEDAVLISECLVYGDIYTSFHIRKYEIQTHVTTQGPERITKEIPHLEGRLLRNLDKNGIVMLGSWVETGDILVGKLTPQVAKESSYAPEDRLLRAILGIQVSTSKETCLKLPIGGRGRVIDVRWVQKKGGSSYNPEIIRVYISQKREIKVGDKVAGRHGNKGIISKILPRQDMPYLQDGRPVDMVFNPLGVPSRMNVGQIFECSLGLAGSLLDRHYRIAPFDERYEQEASRKLVFSELYEASKQTANPWVFEPEYPGKSRIFDGRTGDPFEQPVIIGKPYILKLIHQVDDKIHGRSSGHYALVTQQPLRGRSKQGGQRVGEMEVWALEGFGVAHILQEMLTYKSDHIRARQEVLGTTIVGGTIPKPDDAPESFRLLVRELRSLALELNHFLVSEKNFQINRKEV</sequence>
<name>RPOB_LEPVR</name>
<feature type="chain" id="PRO_0000300446" description="DNA-directed RNA polymerase subunit beta">
    <location>
        <begin position="1"/>
        <end position="1072"/>
    </location>
</feature>
<accession>A4QL98</accession>
<keyword id="KW-0150">Chloroplast</keyword>
<keyword id="KW-0240">DNA-directed RNA polymerase</keyword>
<keyword id="KW-0548">Nucleotidyltransferase</keyword>
<keyword id="KW-0934">Plastid</keyword>
<keyword id="KW-0804">Transcription</keyword>
<keyword id="KW-0808">Transferase</keyword>
<organism>
    <name type="scientific">Lepidium virginicum</name>
    <name type="common">Virginia pepperweed</name>
    <dbReference type="NCBI Taxonomy" id="59292"/>
    <lineage>
        <taxon>Eukaryota</taxon>
        <taxon>Viridiplantae</taxon>
        <taxon>Streptophyta</taxon>
        <taxon>Embryophyta</taxon>
        <taxon>Tracheophyta</taxon>
        <taxon>Spermatophyta</taxon>
        <taxon>Magnoliopsida</taxon>
        <taxon>eudicotyledons</taxon>
        <taxon>Gunneridae</taxon>
        <taxon>Pentapetalae</taxon>
        <taxon>rosids</taxon>
        <taxon>malvids</taxon>
        <taxon>Brassicales</taxon>
        <taxon>Brassicaceae</taxon>
        <taxon>Lepidieae</taxon>
        <taxon>Lepidium</taxon>
    </lineage>
</organism>
<protein>
    <recommendedName>
        <fullName evidence="1">DNA-directed RNA polymerase subunit beta</fullName>
        <ecNumber evidence="1">2.7.7.6</ecNumber>
    </recommendedName>
    <alternativeName>
        <fullName evidence="1">PEP</fullName>
    </alternativeName>
    <alternativeName>
        <fullName evidence="1">Plastid-encoded RNA polymerase subunit beta</fullName>
        <shortName evidence="1">RNA polymerase subunit beta</shortName>
    </alternativeName>
</protein>